<gene>
    <name evidence="1" type="primary">pyrB</name>
    <name type="ordered locus">WRi_008480</name>
</gene>
<sequence>MNKRRNLLNISDLTVDDVENITKLANQYLKKEVANSHILENKTVINLFFEDSTRTLASFEIAAKSLGANVVTLPIRSSSINKGEDLKDMIKTLNAMNPDYIIIRHKSSGIINTLAKYVNCSLINAGDGSSEHPTQALADYLVISNHKKQIKDLKVVICGDILHSRVARSNIRLLKMFGAEINLVAPPTLICKHFPEVDSVHYSLIEGIKDADVIMLLRLQKERMNNSSSEKEYFYLYGLDSQKLSYAKPDAIVMHPGPINRGIEISSDVADCVILQQVEFGLAIRKAVLHYYRPC</sequence>
<keyword id="KW-0665">Pyrimidine biosynthesis</keyword>
<keyword id="KW-0808">Transferase</keyword>
<reference key="1">
    <citation type="journal article" date="2009" name="Proc. Natl. Acad. Sci. U.S.A.">
        <title>The mosaic genome structure of the Wolbachia wRi strain infecting Drosophila simulans.</title>
        <authorList>
            <person name="Klasson L."/>
            <person name="Westberg J."/>
            <person name="Sapountzis P."/>
            <person name="Naeslund K."/>
            <person name="Lutnaes Y."/>
            <person name="Darby A.C."/>
            <person name="Veneti Z."/>
            <person name="Chen L."/>
            <person name="Braig H.R."/>
            <person name="Garrett R."/>
            <person name="Bourtzis K."/>
            <person name="Andersson S.G."/>
        </authorList>
    </citation>
    <scope>NUCLEOTIDE SEQUENCE [LARGE SCALE GENOMIC DNA]</scope>
    <source>
        <strain>wRi</strain>
    </source>
</reference>
<protein>
    <recommendedName>
        <fullName evidence="1">Aspartate carbamoyltransferase catalytic subunit</fullName>
        <ecNumber evidence="1">2.1.3.2</ecNumber>
    </recommendedName>
    <alternativeName>
        <fullName evidence="1">Aspartate transcarbamylase</fullName>
        <shortName evidence="1">ATCase</shortName>
    </alternativeName>
</protein>
<proteinExistence type="inferred from homology"/>
<organism>
    <name type="scientific">Wolbachia sp. subsp. Drosophila simulans (strain wRi)</name>
    <dbReference type="NCBI Taxonomy" id="66084"/>
    <lineage>
        <taxon>Bacteria</taxon>
        <taxon>Pseudomonadati</taxon>
        <taxon>Pseudomonadota</taxon>
        <taxon>Alphaproteobacteria</taxon>
        <taxon>Rickettsiales</taxon>
        <taxon>Anaplasmataceae</taxon>
        <taxon>Wolbachieae</taxon>
        <taxon>Wolbachia</taxon>
    </lineage>
</organism>
<feature type="chain" id="PRO_1000191917" description="Aspartate carbamoyltransferase catalytic subunit">
    <location>
        <begin position="1"/>
        <end position="295"/>
    </location>
</feature>
<feature type="binding site" evidence="1">
    <location>
        <position position="54"/>
    </location>
    <ligand>
        <name>carbamoyl phosphate</name>
        <dbReference type="ChEBI" id="CHEBI:58228"/>
    </ligand>
</feature>
<feature type="binding site" evidence="1">
    <location>
        <position position="55"/>
    </location>
    <ligand>
        <name>carbamoyl phosphate</name>
        <dbReference type="ChEBI" id="CHEBI:58228"/>
    </ligand>
</feature>
<feature type="binding site" evidence="1">
    <location>
        <position position="82"/>
    </location>
    <ligand>
        <name>L-aspartate</name>
        <dbReference type="ChEBI" id="CHEBI:29991"/>
    </ligand>
</feature>
<feature type="binding site" evidence="1">
    <location>
        <position position="104"/>
    </location>
    <ligand>
        <name>carbamoyl phosphate</name>
        <dbReference type="ChEBI" id="CHEBI:58228"/>
    </ligand>
</feature>
<feature type="binding site" evidence="1">
    <location>
        <position position="132"/>
    </location>
    <ligand>
        <name>carbamoyl phosphate</name>
        <dbReference type="ChEBI" id="CHEBI:58228"/>
    </ligand>
</feature>
<feature type="binding site" evidence="1">
    <location>
        <position position="135"/>
    </location>
    <ligand>
        <name>carbamoyl phosphate</name>
        <dbReference type="ChEBI" id="CHEBI:58228"/>
    </ligand>
</feature>
<feature type="binding site" evidence="1">
    <location>
        <position position="165"/>
    </location>
    <ligand>
        <name>L-aspartate</name>
        <dbReference type="ChEBI" id="CHEBI:29991"/>
    </ligand>
</feature>
<feature type="binding site" evidence="1">
    <location>
        <position position="218"/>
    </location>
    <ligand>
        <name>L-aspartate</name>
        <dbReference type="ChEBI" id="CHEBI:29991"/>
    </ligand>
</feature>
<feature type="binding site" evidence="1">
    <location>
        <position position="257"/>
    </location>
    <ligand>
        <name>carbamoyl phosphate</name>
        <dbReference type="ChEBI" id="CHEBI:58228"/>
    </ligand>
</feature>
<feature type="binding site" evidence="1">
    <location>
        <position position="258"/>
    </location>
    <ligand>
        <name>carbamoyl phosphate</name>
        <dbReference type="ChEBI" id="CHEBI:58228"/>
    </ligand>
</feature>
<accession>C0R3U0</accession>
<evidence type="ECO:0000255" key="1">
    <source>
        <dbReference type="HAMAP-Rule" id="MF_00001"/>
    </source>
</evidence>
<comment type="function">
    <text evidence="1">Catalyzes the condensation of carbamoyl phosphate and aspartate to form carbamoyl aspartate and inorganic phosphate, the committed step in the de novo pyrimidine nucleotide biosynthesis pathway.</text>
</comment>
<comment type="catalytic activity">
    <reaction evidence="1">
        <text>carbamoyl phosphate + L-aspartate = N-carbamoyl-L-aspartate + phosphate + H(+)</text>
        <dbReference type="Rhea" id="RHEA:20013"/>
        <dbReference type="ChEBI" id="CHEBI:15378"/>
        <dbReference type="ChEBI" id="CHEBI:29991"/>
        <dbReference type="ChEBI" id="CHEBI:32814"/>
        <dbReference type="ChEBI" id="CHEBI:43474"/>
        <dbReference type="ChEBI" id="CHEBI:58228"/>
        <dbReference type="EC" id="2.1.3.2"/>
    </reaction>
</comment>
<comment type="pathway">
    <text evidence="1">Pyrimidine metabolism; UMP biosynthesis via de novo pathway; (S)-dihydroorotate from bicarbonate: step 2/3.</text>
</comment>
<comment type="subunit">
    <text evidence="1">Heterododecamer (2C3:3R2) of six catalytic PyrB chains organized as two trimers (C3), and six regulatory PyrI chains organized as three dimers (R2).</text>
</comment>
<comment type="similarity">
    <text evidence="1">Belongs to the aspartate/ornithine carbamoyltransferase superfamily. ATCase family.</text>
</comment>
<dbReference type="EC" id="2.1.3.2" evidence="1"/>
<dbReference type="EMBL" id="CP001391">
    <property type="protein sequence ID" value="ACN95582.1"/>
    <property type="molecule type" value="Genomic_DNA"/>
</dbReference>
<dbReference type="RefSeq" id="WP_006280416.1">
    <property type="nucleotide sequence ID" value="NZ_MKIF01000053.1"/>
</dbReference>
<dbReference type="SMR" id="C0R3U0"/>
<dbReference type="STRING" id="66084.WRi_008480"/>
<dbReference type="KEGG" id="wri:WRi_008480"/>
<dbReference type="HOGENOM" id="CLU_043846_2_0_5"/>
<dbReference type="UniPathway" id="UPA00070">
    <property type="reaction ID" value="UER00116"/>
</dbReference>
<dbReference type="Proteomes" id="UP000001293">
    <property type="component" value="Chromosome"/>
</dbReference>
<dbReference type="GO" id="GO:0005829">
    <property type="term" value="C:cytosol"/>
    <property type="evidence" value="ECO:0007669"/>
    <property type="project" value="TreeGrafter"/>
</dbReference>
<dbReference type="GO" id="GO:0016597">
    <property type="term" value="F:amino acid binding"/>
    <property type="evidence" value="ECO:0007669"/>
    <property type="project" value="InterPro"/>
</dbReference>
<dbReference type="GO" id="GO:0004070">
    <property type="term" value="F:aspartate carbamoyltransferase activity"/>
    <property type="evidence" value="ECO:0007669"/>
    <property type="project" value="UniProtKB-UniRule"/>
</dbReference>
<dbReference type="GO" id="GO:0006207">
    <property type="term" value="P:'de novo' pyrimidine nucleobase biosynthetic process"/>
    <property type="evidence" value="ECO:0007669"/>
    <property type="project" value="InterPro"/>
</dbReference>
<dbReference type="GO" id="GO:0044205">
    <property type="term" value="P:'de novo' UMP biosynthetic process"/>
    <property type="evidence" value="ECO:0007669"/>
    <property type="project" value="UniProtKB-UniRule"/>
</dbReference>
<dbReference type="GO" id="GO:0006520">
    <property type="term" value="P:amino acid metabolic process"/>
    <property type="evidence" value="ECO:0007669"/>
    <property type="project" value="InterPro"/>
</dbReference>
<dbReference type="Gene3D" id="3.40.50.1370">
    <property type="entry name" value="Aspartate/ornithine carbamoyltransferase"/>
    <property type="match status" value="2"/>
</dbReference>
<dbReference type="HAMAP" id="MF_00001">
    <property type="entry name" value="Asp_carb_tr"/>
    <property type="match status" value="1"/>
</dbReference>
<dbReference type="InterPro" id="IPR006132">
    <property type="entry name" value="Asp/Orn_carbamoyltranf_P-bd"/>
</dbReference>
<dbReference type="InterPro" id="IPR006130">
    <property type="entry name" value="Asp/Orn_carbamoylTrfase"/>
</dbReference>
<dbReference type="InterPro" id="IPR036901">
    <property type="entry name" value="Asp/Orn_carbamoylTrfase_sf"/>
</dbReference>
<dbReference type="InterPro" id="IPR002082">
    <property type="entry name" value="Asp_carbamoyltransf"/>
</dbReference>
<dbReference type="InterPro" id="IPR006131">
    <property type="entry name" value="Asp_carbamoyltransf_Asp/Orn-bd"/>
</dbReference>
<dbReference type="NCBIfam" id="TIGR00670">
    <property type="entry name" value="asp_carb_tr"/>
    <property type="match status" value="1"/>
</dbReference>
<dbReference type="NCBIfam" id="NF002032">
    <property type="entry name" value="PRK00856.1"/>
    <property type="match status" value="1"/>
</dbReference>
<dbReference type="PANTHER" id="PTHR45753:SF6">
    <property type="entry name" value="ASPARTATE CARBAMOYLTRANSFERASE"/>
    <property type="match status" value="1"/>
</dbReference>
<dbReference type="PANTHER" id="PTHR45753">
    <property type="entry name" value="ORNITHINE CARBAMOYLTRANSFERASE, MITOCHONDRIAL"/>
    <property type="match status" value="1"/>
</dbReference>
<dbReference type="Pfam" id="PF00185">
    <property type="entry name" value="OTCace"/>
    <property type="match status" value="1"/>
</dbReference>
<dbReference type="Pfam" id="PF02729">
    <property type="entry name" value="OTCace_N"/>
    <property type="match status" value="1"/>
</dbReference>
<dbReference type="PRINTS" id="PR00100">
    <property type="entry name" value="AOTCASE"/>
</dbReference>
<dbReference type="PRINTS" id="PR00101">
    <property type="entry name" value="ATCASE"/>
</dbReference>
<dbReference type="SUPFAM" id="SSF53671">
    <property type="entry name" value="Aspartate/ornithine carbamoyltransferase"/>
    <property type="match status" value="1"/>
</dbReference>
<dbReference type="PROSITE" id="PS00097">
    <property type="entry name" value="CARBAMOYLTRANSFERASE"/>
    <property type="match status" value="1"/>
</dbReference>
<name>PYRB_WOLWR</name>